<comment type="function">
    <text evidence="1">Binds and transfers iron-sulfur (Fe-S) clusters to target apoproteins. Can hydrolyze ATP.</text>
</comment>
<comment type="subunit">
    <text evidence="1">Homodimer.</text>
</comment>
<comment type="similarity">
    <text evidence="2">In the N-terminal section; belongs to the MIP18 family.</text>
</comment>
<comment type="similarity">
    <text evidence="2">In the C-terminal section; belongs to the Mrp/NBP35 ATP-binding proteins family.</text>
</comment>
<comment type="sequence caution" evidence="2">
    <conflict type="erroneous initiation">
        <sequence resource="EMBL-CDS" id="SIT99862"/>
    </conflict>
    <text>Extended N-terminus.</text>
</comment>
<proteinExistence type="inferred from homology"/>
<accession>P65442</accession>
<accession>A0A1R3XZW0</accession>
<accession>O33225</accession>
<accession>X2BHF8</accession>
<gene>
    <name type="primary">mrp</name>
    <name type="ordered locus">BQ2027_MB1261C</name>
</gene>
<feature type="chain" id="PRO_0000184939" description="Iron-sulfur cluster carrier protein">
    <location>
        <begin position="1"/>
        <end position="381"/>
    </location>
</feature>
<feature type="binding site" evidence="1">
    <location>
        <begin position="125"/>
        <end position="132"/>
    </location>
    <ligand>
        <name>ATP</name>
        <dbReference type="ChEBI" id="CHEBI:30616"/>
    </ligand>
</feature>
<protein>
    <recommendedName>
        <fullName evidence="1">Iron-sulfur cluster carrier protein</fullName>
    </recommendedName>
</protein>
<keyword id="KW-0067">ATP-binding</keyword>
<keyword id="KW-0378">Hydrolase</keyword>
<keyword id="KW-0408">Iron</keyword>
<keyword id="KW-0411">Iron-sulfur</keyword>
<keyword id="KW-0479">Metal-binding</keyword>
<keyword id="KW-0547">Nucleotide-binding</keyword>
<keyword id="KW-1185">Reference proteome</keyword>
<evidence type="ECO:0000255" key="1">
    <source>
        <dbReference type="HAMAP-Rule" id="MF_02040"/>
    </source>
</evidence>
<evidence type="ECO:0000305" key="2"/>
<sequence>MSGTRDGDLNAAIRTALGKVIDPELRRPITELGMVKSIDTGPDGSVHVEIYLTIAGCPKKSEITERVTRAVADVPGTSAVRVSLDVMSDEQRTELRKQLRGDTREPVIPFAQPDSLTRVYAVASGKGGVGKSTVTVNLAAAMAVRGLSIGVLDADIHGHSIPRMMGTTDRPTQVESMILPPIAHQVKVISIAQFTQGNTPVVWRGPMLHRALQQFLADVYWGDLDVLLLDLPPGTGDVAISVAQLIPNAELLVVTTPQLAAAEVAERAGSIALQTRQRIVGVVENMSGLTLPDGTTMQVFGEGGGRLVAERLSRAVGADVPLLGQIPLDPALVAAGDSGVPLVLSSPDSAIGKELHSIADGLSTRRRGLAGMSLGLDPTRR</sequence>
<organism>
    <name type="scientific">Mycobacterium bovis (strain ATCC BAA-935 / AF2122/97)</name>
    <dbReference type="NCBI Taxonomy" id="233413"/>
    <lineage>
        <taxon>Bacteria</taxon>
        <taxon>Bacillati</taxon>
        <taxon>Actinomycetota</taxon>
        <taxon>Actinomycetes</taxon>
        <taxon>Mycobacteriales</taxon>
        <taxon>Mycobacteriaceae</taxon>
        <taxon>Mycobacterium</taxon>
        <taxon>Mycobacterium tuberculosis complex</taxon>
    </lineage>
</organism>
<reference key="1">
    <citation type="journal article" date="2003" name="Proc. Natl. Acad. Sci. U.S.A.">
        <title>The complete genome sequence of Mycobacterium bovis.</title>
        <authorList>
            <person name="Garnier T."/>
            <person name="Eiglmeier K."/>
            <person name="Camus J.-C."/>
            <person name="Medina N."/>
            <person name="Mansoor H."/>
            <person name="Pryor M."/>
            <person name="Duthoy S."/>
            <person name="Grondin S."/>
            <person name="Lacroix C."/>
            <person name="Monsempe C."/>
            <person name="Simon S."/>
            <person name="Harris B."/>
            <person name="Atkin R."/>
            <person name="Doggett J."/>
            <person name="Mayes R."/>
            <person name="Keating L."/>
            <person name="Wheeler P.R."/>
            <person name="Parkhill J."/>
            <person name="Barrell B.G."/>
            <person name="Cole S.T."/>
            <person name="Gordon S.V."/>
            <person name="Hewinson R.G."/>
        </authorList>
    </citation>
    <scope>NUCLEOTIDE SEQUENCE [LARGE SCALE GENOMIC DNA]</scope>
    <source>
        <strain>ATCC BAA-935 / AF2122/97</strain>
    </source>
</reference>
<reference key="2">
    <citation type="journal article" date="2017" name="Genome Announc.">
        <title>Updated reference genome sequence and annotation of Mycobacterium bovis AF2122/97.</title>
        <authorList>
            <person name="Malone K.M."/>
            <person name="Farrell D."/>
            <person name="Stuber T.P."/>
            <person name="Schubert O.T."/>
            <person name="Aebersold R."/>
            <person name="Robbe-Austerman S."/>
            <person name="Gordon S.V."/>
        </authorList>
    </citation>
    <scope>NUCLEOTIDE SEQUENCE [LARGE SCALE GENOMIC DNA]</scope>
    <scope>GENOME REANNOTATION</scope>
    <source>
        <strain>ATCC BAA-935 / AF2122/97</strain>
    </source>
</reference>
<dbReference type="EMBL" id="LT708304">
    <property type="protein sequence ID" value="SIT99862.1"/>
    <property type="status" value="ALT_INIT"/>
    <property type="molecule type" value="Genomic_DNA"/>
</dbReference>
<dbReference type="RefSeq" id="NP_854915.1">
    <property type="nucleotide sequence ID" value="NC_002945.3"/>
</dbReference>
<dbReference type="SMR" id="P65442"/>
<dbReference type="KEGG" id="mbo:BQ2027_MB1261C"/>
<dbReference type="PATRIC" id="fig|233413.5.peg.1384"/>
<dbReference type="Proteomes" id="UP000001419">
    <property type="component" value="Chromosome"/>
</dbReference>
<dbReference type="GO" id="GO:0051539">
    <property type="term" value="F:4 iron, 4 sulfur cluster binding"/>
    <property type="evidence" value="ECO:0007669"/>
    <property type="project" value="TreeGrafter"/>
</dbReference>
<dbReference type="GO" id="GO:0005524">
    <property type="term" value="F:ATP binding"/>
    <property type="evidence" value="ECO:0007669"/>
    <property type="project" value="UniProtKB-UniRule"/>
</dbReference>
<dbReference type="GO" id="GO:0016887">
    <property type="term" value="F:ATP hydrolysis activity"/>
    <property type="evidence" value="ECO:0007669"/>
    <property type="project" value="UniProtKB-UniRule"/>
</dbReference>
<dbReference type="GO" id="GO:0140663">
    <property type="term" value="F:ATP-dependent FeS chaperone activity"/>
    <property type="evidence" value="ECO:0007669"/>
    <property type="project" value="InterPro"/>
</dbReference>
<dbReference type="GO" id="GO:0046872">
    <property type="term" value="F:metal ion binding"/>
    <property type="evidence" value="ECO:0007669"/>
    <property type="project" value="UniProtKB-KW"/>
</dbReference>
<dbReference type="GO" id="GO:0016226">
    <property type="term" value="P:iron-sulfur cluster assembly"/>
    <property type="evidence" value="ECO:0007669"/>
    <property type="project" value="InterPro"/>
</dbReference>
<dbReference type="CDD" id="cd02037">
    <property type="entry name" value="Mrp_NBP35"/>
    <property type="match status" value="1"/>
</dbReference>
<dbReference type="FunFam" id="3.40.50.300:FF:000304">
    <property type="entry name" value="Iron-sulfur cluster carrier protein"/>
    <property type="match status" value="1"/>
</dbReference>
<dbReference type="Gene3D" id="3.30.300.130">
    <property type="entry name" value="Fe-S cluster assembly (FSCA)"/>
    <property type="match status" value="1"/>
</dbReference>
<dbReference type="Gene3D" id="3.40.50.300">
    <property type="entry name" value="P-loop containing nucleotide triphosphate hydrolases"/>
    <property type="match status" value="1"/>
</dbReference>
<dbReference type="HAMAP" id="MF_02040">
    <property type="entry name" value="Mrp_NBP35"/>
    <property type="match status" value="1"/>
</dbReference>
<dbReference type="InterPro" id="IPR034904">
    <property type="entry name" value="FSCA_dom_sf"/>
</dbReference>
<dbReference type="InterPro" id="IPR002744">
    <property type="entry name" value="MIP18-like"/>
</dbReference>
<dbReference type="InterPro" id="IPR000808">
    <property type="entry name" value="Mrp-like_CS"/>
</dbReference>
<dbReference type="InterPro" id="IPR019591">
    <property type="entry name" value="Mrp/NBP35_ATP-bd"/>
</dbReference>
<dbReference type="InterPro" id="IPR044304">
    <property type="entry name" value="NUBPL-like"/>
</dbReference>
<dbReference type="InterPro" id="IPR027417">
    <property type="entry name" value="P-loop_NTPase"/>
</dbReference>
<dbReference type="InterPro" id="IPR033756">
    <property type="entry name" value="YlxH/NBP35"/>
</dbReference>
<dbReference type="PANTHER" id="PTHR42961">
    <property type="entry name" value="IRON-SULFUR PROTEIN NUBPL"/>
    <property type="match status" value="1"/>
</dbReference>
<dbReference type="PANTHER" id="PTHR42961:SF2">
    <property type="entry name" value="IRON-SULFUR PROTEIN NUBPL"/>
    <property type="match status" value="1"/>
</dbReference>
<dbReference type="Pfam" id="PF01883">
    <property type="entry name" value="FeS_assembly_P"/>
    <property type="match status" value="1"/>
</dbReference>
<dbReference type="Pfam" id="PF10609">
    <property type="entry name" value="ParA"/>
    <property type="match status" value="1"/>
</dbReference>
<dbReference type="SUPFAM" id="SSF117916">
    <property type="entry name" value="Fe-S cluster assembly (FSCA) domain-like"/>
    <property type="match status" value="1"/>
</dbReference>
<dbReference type="SUPFAM" id="SSF52540">
    <property type="entry name" value="P-loop containing nucleoside triphosphate hydrolases"/>
    <property type="match status" value="1"/>
</dbReference>
<dbReference type="PROSITE" id="PS01215">
    <property type="entry name" value="MRP"/>
    <property type="match status" value="1"/>
</dbReference>
<name>APBC_MYCBO</name>